<accession>A8AAU0</accession>
<reference key="1">
    <citation type="journal article" date="2008" name="Genome Biol.">
        <title>A genomic analysis of the archaeal system Ignicoccus hospitalis-Nanoarchaeum equitans.</title>
        <authorList>
            <person name="Podar M."/>
            <person name="Anderson I."/>
            <person name="Makarova K.S."/>
            <person name="Elkins J.G."/>
            <person name="Ivanova N."/>
            <person name="Wall M.A."/>
            <person name="Lykidis A."/>
            <person name="Mavromatis K."/>
            <person name="Sun H."/>
            <person name="Hudson M.E."/>
            <person name="Chen W."/>
            <person name="Deciu C."/>
            <person name="Hutchison D."/>
            <person name="Eads J.R."/>
            <person name="Anderson A."/>
            <person name="Fernandes F."/>
            <person name="Szeto E."/>
            <person name="Lapidus A."/>
            <person name="Kyrpides N.C."/>
            <person name="Saier M.H. Jr."/>
            <person name="Richardson P.M."/>
            <person name="Rachel R."/>
            <person name="Huber H."/>
            <person name="Eisen J.A."/>
            <person name="Koonin E.V."/>
            <person name="Keller M."/>
            <person name="Stetter K.O."/>
        </authorList>
    </citation>
    <scope>NUCLEOTIDE SEQUENCE [LARGE SCALE GENOMIC DNA]</scope>
    <source>
        <strain>KIN4/I / DSM 18386 / JCM 14125</strain>
    </source>
</reference>
<name>RS15_IGNH4</name>
<comment type="subunit">
    <text evidence="1">Part of the 30S ribosomal subunit.</text>
</comment>
<comment type="similarity">
    <text evidence="1">Belongs to the universal ribosomal protein uS15 family.</text>
</comment>
<gene>
    <name evidence="1" type="primary">rps15</name>
    <name type="ordered locus">Igni_0860</name>
</gene>
<keyword id="KW-1185">Reference proteome</keyword>
<keyword id="KW-0687">Ribonucleoprotein</keyword>
<keyword id="KW-0689">Ribosomal protein</keyword>
<sequence>MNKRKEKGKSHSKRPVRNTPPRWVPFGPEEIKALIVELSKKGYGPSMIGIILRDQFGVPLVKPIVGKKLVKIMEEQGVAPPIPEDLFHLMKRAVRVRAHLAEHPKDKHSARGLMEIESKIRRLVKYYKRVGKLPPDWKYDPERARLLVQQYSALFESGA</sequence>
<organism>
    <name type="scientific">Ignicoccus hospitalis (strain KIN4/I / DSM 18386 / JCM 14125)</name>
    <dbReference type="NCBI Taxonomy" id="453591"/>
    <lineage>
        <taxon>Archaea</taxon>
        <taxon>Thermoproteota</taxon>
        <taxon>Thermoprotei</taxon>
        <taxon>Desulfurococcales</taxon>
        <taxon>Desulfurococcaceae</taxon>
        <taxon>Ignicoccus</taxon>
    </lineage>
</organism>
<proteinExistence type="inferred from homology"/>
<protein>
    <recommendedName>
        <fullName evidence="1">Small ribosomal subunit protein uS15</fullName>
    </recommendedName>
    <alternativeName>
        <fullName evidence="3">30S ribosomal protein S15</fullName>
    </alternativeName>
</protein>
<evidence type="ECO:0000255" key="1">
    <source>
        <dbReference type="HAMAP-Rule" id="MF_01343"/>
    </source>
</evidence>
<evidence type="ECO:0000256" key="2">
    <source>
        <dbReference type="SAM" id="MobiDB-lite"/>
    </source>
</evidence>
<evidence type="ECO:0000305" key="3"/>
<dbReference type="EMBL" id="CP000816">
    <property type="protein sequence ID" value="ABU82042.1"/>
    <property type="molecule type" value="Genomic_DNA"/>
</dbReference>
<dbReference type="RefSeq" id="WP_012123006.1">
    <property type="nucleotide sequence ID" value="NC_009776.1"/>
</dbReference>
<dbReference type="SMR" id="A8AAU0"/>
<dbReference type="STRING" id="453591.Igni_0860"/>
<dbReference type="GeneID" id="5562434"/>
<dbReference type="KEGG" id="iho:Igni_0860"/>
<dbReference type="eggNOG" id="arCOG04185">
    <property type="taxonomic scope" value="Archaea"/>
</dbReference>
<dbReference type="HOGENOM" id="CLU_090139_2_0_2"/>
<dbReference type="OrthoDB" id="6533at2157"/>
<dbReference type="PhylomeDB" id="A8AAU0"/>
<dbReference type="Proteomes" id="UP000000262">
    <property type="component" value="Chromosome"/>
</dbReference>
<dbReference type="GO" id="GO:0022627">
    <property type="term" value="C:cytosolic small ribosomal subunit"/>
    <property type="evidence" value="ECO:0007669"/>
    <property type="project" value="TreeGrafter"/>
</dbReference>
<dbReference type="GO" id="GO:0070181">
    <property type="term" value="F:small ribosomal subunit rRNA binding"/>
    <property type="evidence" value="ECO:0007669"/>
    <property type="project" value="TreeGrafter"/>
</dbReference>
<dbReference type="GO" id="GO:0003735">
    <property type="term" value="F:structural constituent of ribosome"/>
    <property type="evidence" value="ECO:0007669"/>
    <property type="project" value="InterPro"/>
</dbReference>
<dbReference type="GO" id="GO:0006412">
    <property type="term" value="P:translation"/>
    <property type="evidence" value="ECO:0007669"/>
    <property type="project" value="UniProtKB-UniRule"/>
</dbReference>
<dbReference type="CDD" id="cd00353">
    <property type="entry name" value="Ribosomal_S15p_S13e"/>
    <property type="match status" value="1"/>
</dbReference>
<dbReference type="FunFam" id="1.10.287.10:FF:000003">
    <property type="entry name" value="40S ribosomal protein S13"/>
    <property type="match status" value="1"/>
</dbReference>
<dbReference type="Gene3D" id="4.10.860.130">
    <property type="match status" value="1"/>
</dbReference>
<dbReference type="Gene3D" id="1.10.287.10">
    <property type="entry name" value="S15/NS1, RNA-binding"/>
    <property type="match status" value="1"/>
</dbReference>
<dbReference type="HAMAP" id="MF_01343_A">
    <property type="entry name" value="Ribosomal_uS15_A"/>
    <property type="match status" value="1"/>
</dbReference>
<dbReference type="InterPro" id="IPR000589">
    <property type="entry name" value="Ribosomal_uS15"/>
</dbReference>
<dbReference type="InterPro" id="IPR023029">
    <property type="entry name" value="Ribosomal_uS15_arc_euk"/>
</dbReference>
<dbReference type="InterPro" id="IPR012606">
    <property type="entry name" value="Ribosomal_uS15_N"/>
</dbReference>
<dbReference type="InterPro" id="IPR009068">
    <property type="entry name" value="uS15_NS1_RNA-bd_sf"/>
</dbReference>
<dbReference type="NCBIfam" id="NF006331">
    <property type="entry name" value="PRK08561.1"/>
    <property type="match status" value="1"/>
</dbReference>
<dbReference type="PANTHER" id="PTHR11885">
    <property type="entry name" value="RIBOSOMAL PROTEIN S15P/S13E"/>
    <property type="match status" value="1"/>
</dbReference>
<dbReference type="PANTHER" id="PTHR11885:SF6">
    <property type="entry name" value="SMALL RIBOSOMAL SUBUNIT PROTEIN US15"/>
    <property type="match status" value="1"/>
</dbReference>
<dbReference type="Pfam" id="PF08069">
    <property type="entry name" value="Ribosomal_S13_N"/>
    <property type="match status" value="1"/>
</dbReference>
<dbReference type="Pfam" id="PF00312">
    <property type="entry name" value="Ribosomal_S15"/>
    <property type="match status" value="1"/>
</dbReference>
<dbReference type="SMART" id="SM01386">
    <property type="entry name" value="Ribosomal_S13_N"/>
    <property type="match status" value="1"/>
</dbReference>
<dbReference type="SMART" id="SM01387">
    <property type="entry name" value="Ribosomal_S15"/>
    <property type="match status" value="1"/>
</dbReference>
<dbReference type="SUPFAM" id="SSF47060">
    <property type="entry name" value="S15/NS1 RNA-binding domain"/>
    <property type="match status" value="1"/>
</dbReference>
<dbReference type="PROSITE" id="PS00362">
    <property type="entry name" value="RIBOSOMAL_S15"/>
    <property type="match status" value="1"/>
</dbReference>
<feature type="chain" id="PRO_0000354224" description="Small ribosomal subunit protein uS15">
    <location>
        <begin position="1"/>
        <end position="159"/>
    </location>
</feature>
<feature type="region of interest" description="Disordered" evidence="2">
    <location>
        <begin position="1"/>
        <end position="22"/>
    </location>
</feature>
<feature type="compositionally biased region" description="Basic residues" evidence="2">
    <location>
        <begin position="1"/>
        <end position="16"/>
    </location>
</feature>